<dbReference type="EMBL" id="CP000931">
    <property type="protein sequence ID" value="ABZ78609.1"/>
    <property type="molecule type" value="Genomic_DNA"/>
</dbReference>
<dbReference type="RefSeq" id="WP_012279126.1">
    <property type="nucleotide sequence ID" value="NC_010334.1"/>
</dbReference>
<dbReference type="SMR" id="B0TL64"/>
<dbReference type="STRING" id="458817.Shal_4069"/>
<dbReference type="KEGG" id="shl:Shal_4069"/>
<dbReference type="eggNOG" id="COG0792">
    <property type="taxonomic scope" value="Bacteria"/>
</dbReference>
<dbReference type="HOGENOM" id="CLU_115353_1_0_6"/>
<dbReference type="OrthoDB" id="9794876at2"/>
<dbReference type="Proteomes" id="UP000001317">
    <property type="component" value="Chromosome"/>
</dbReference>
<dbReference type="GO" id="GO:0003676">
    <property type="term" value="F:nucleic acid binding"/>
    <property type="evidence" value="ECO:0007669"/>
    <property type="project" value="InterPro"/>
</dbReference>
<dbReference type="Gene3D" id="3.40.1350.10">
    <property type="match status" value="1"/>
</dbReference>
<dbReference type="HAMAP" id="MF_00048">
    <property type="entry name" value="UPF0102"/>
    <property type="match status" value="1"/>
</dbReference>
<dbReference type="InterPro" id="IPR011335">
    <property type="entry name" value="Restrct_endonuc-II-like"/>
</dbReference>
<dbReference type="InterPro" id="IPR011856">
    <property type="entry name" value="tRNA_endonuc-like_dom_sf"/>
</dbReference>
<dbReference type="InterPro" id="IPR003509">
    <property type="entry name" value="UPF0102_YraN-like"/>
</dbReference>
<dbReference type="NCBIfam" id="NF009150">
    <property type="entry name" value="PRK12497.1-3"/>
    <property type="match status" value="1"/>
</dbReference>
<dbReference type="NCBIfam" id="TIGR00252">
    <property type="entry name" value="YraN family protein"/>
    <property type="match status" value="1"/>
</dbReference>
<dbReference type="PANTHER" id="PTHR34039">
    <property type="entry name" value="UPF0102 PROTEIN YRAN"/>
    <property type="match status" value="1"/>
</dbReference>
<dbReference type="PANTHER" id="PTHR34039:SF1">
    <property type="entry name" value="UPF0102 PROTEIN YRAN"/>
    <property type="match status" value="1"/>
</dbReference>
<dbReference type="Pfam" id="PF02021">
    <property type="entry name" value="UPF0102"/>
    <property type="match status" value="1"/>
</dbReference>
<dbReference type="SUPFAM" id="SSF52980">
    <property type="entry name" value="Restriction endonuclease-like"/>
    <property type="match status" value="1"/>
</dbReference>
<proteinExistence type="inferred from homology"/>
<accession>B0TL64</accession>
<sequence length="113" mass="12776">MTADNPNQGQIAEHAARQYLQQRGLIFVEQNVRYRFGEIDIVMKDGSDWVFVEVKYRSASQYGGAVNSLSAAQAGRIRKAASHYIQLNRIDAICRFDVIAADPQGIQWIRDAF</sequence>
<reference key="1">
    <citation type="submission" date="2008-01" db="EMBL/GenBank/DDBJ databases">
        <title>Complete sequence of Shewanella halifaxensis HAW-EB4.</title>
        <authorList>
            <consortium name="US DOE Joint Genome Institute"/>
            <person name="Copeland A."/>
            <person name="Lucas S."/>
            <person name="Lapidus A."/>
            <person name="Glavina del Rio T."/>
            <person name="Dalin E."/>
            <person name="Tice H."/>
            <person name="Bruce D."/>
            <person name="Goodwin L."/>
            <person name="Pitluck S."/>
            <person name="Sims D."/>
            <person name="Brettin T."/>
            <person name="Detter J.C."/>
            <person name="Han C."/>
            <person name="Kuske C.R."/>
            <person name="Schmutz J."/>
            <person name="Larimer F."/>
            <person name="Land M."/>
            <person name="Hauser L."/>
            <person name="Kyrpides N."/>
            <person name="Kim E."/>
            <person name="Zhao J.-S."/>
            <person name="Richardson P."/>
        </authorList>
    </citation>
    <scope>NUCLEOTIDE SEQUENCE [LARGE SCALE GENOMIC DNA]</scope>
    <source>
        <strain>HAW-EB4</strain>
    </source>
</reference>
<name>Y4069_SHEHH</name>
<feature type="chain" id="PRO_0000336258" description="UPF0102 protein Shal_4069">
    <location>
        <begin position="1"/>
        <end position="113"/>
    </location>
</feature>
<organism>
    <name type="scientific">Shewanella halifaxensis (strain HAW-EB4)</name>
    <dbReference type="NCBI Taxonomy" id="458817"/>
    <lineage>
        <taxon>Bacteria</taxon>
        <taxon>Pseudomonadati</taxon>
        <taxon>Pseudomonadota</taxon>
        <taxon>Gammaproteobacteria</taxon>
        <taxon>Alteromonadales</taxon>
        <taxon>Shewanellaceae</taxon>
        <taxon>Shewanella</taxon>
    </lineage>
</organism>
<evidence type="ECO:0000255" key="1">
    <source>
        <dbReference type="HAMAP-Rule" id="MF_00048"/>
    </source>
</evidence>
<protein>
    <recommendedName>
        <fullName evidence="1">UPF0102 protein Shal_4069</fullName>
    </recommendedName>
</protein>
<comment type="similarity">
    <text evidence="1">Belongs to the UPF0102 family.</text>
</comment>
<gene>
    <name type="ordered locus">Shal_4069</name>
</gene>